<protein>
    <recommendedName>
        <fullName>Solute carrier family 25 member 16</fullName>
    </recommendedName>
    <alternativeName>
        <fullName evidence="2">Graves disease carrier protein</fullName>
        <shortName evidence="2">GDC</shortName>
    </alternativeName>
    <alternativeName>
        <fullName>Mitochondrial solute carrier protein homolog</fullName>
    </alternativeName>
</protein>
<keyword id="KW-0472">Membrane</keyword>
<keyword id="KW-0496">Mitochondrion</keyword>
<keyword id="KW-0999">Mitochondrion inner membrane</keyword>
<keyword id="KW-1185">Reference proteome</keyword>
<keyword id="KW-0677">Repeat</keyword>
<keyword id="KW-0812">Transmembrane</keyword>
<keyword id="KW-0813">Transport</keyword>
<comment type="function">
    <text evidence="1">May be involved in the transport of coenzyme A in the mitochondrial matrix. Very little is known about the physiological function of this carrier.</text>
</comment>
<comment type="subcellular location">
    <subcellularLocation>
        <location evidence="1">Mitochondrion inner membrane</location>
        <topology evidence="3">Multi-pass membrane protein</topology>
    </subcellularLocation>
</comment>
<comment type="similarity">
    <text evidence="4">Belongs to the mitochondrial carrier (TC 2.A.29) family.</text>
</comment>
<accession>P16261</accession>
<name>GDC_RAT</name>
<proteinExistence type="evidence at transcript level"/>
<gene>
    <name evidence="5" type="primary">Slc25a16</name>
    <name type="synonym">Gda</name>
</gene>
<reference key="1">
    <citation type="journal article" date="1989" name="Mol. Endocrinol.">
        <title>Sequence and chromosomal assignment of a novel cDNA identified by immunoscreening of a thyroid expression library: similarity to a family of mitochondrial solute carrier proteins.</title>
        <authorList>
            <person name="Zarrilli R."/>
            <person name="Oates E.L."/>
            <person name="McBride O.W."/>
            <person name="Lerman M.I."/>
            <person name="Chan J.Y."/>
            <person name="Santisteban P."/>
            <person name="Ursini M.V."/>
            <person name="Notkins A.L."/>
            <person name="Kohn L.D."/>
        </authorList>
    </citation>
    <scope>NUCLEOTIDE SEQUENCE [MRNA]</scope>
    <source>
        <tissue>Thyroid</tissue>
    </source>
</reference>
<sequence length="322" mass="35056">MAALVAAAALAAAEPPPAVPAAAGSGGPTSRRDFYWLRSFLAGSIAGCCAKTTVAPLDRVKVLLQAHNHHYKHLGVLSPLRAVPQKEGYLGLYKGNGAMMIRIFPYGAIQFMAFEHYKTFITTKLGVSGHVHRLMAGSMAGKMSMTAVICTYPLDVVRVRLAFQVKGEHTYSGIIHAFKTIYAKEGGFLGFYRGLMPTILGMAPYASVSFFTFGTLKSVGLSYAPTLLGRPSSDNPNVLVLKTHINLLCGGVARAIAQTISYPFDVTRRRMQLGAVLPEFEKCLTMRETMKYVYGHHGIRRGLYRGLSLNYIRCIPSQAVAF</sequence>
<feature type="chain" id="PRO_0000090618" description="Solute carrier family 25 member 16">
    <location>
        <begin position="1"/>
        <end position="322" status="greater than"/>
    </location>
</feature>
<feature type="repeat" description="Solcar 1">
    <location>
        <begin position="34"/>
        <end position="120"/>
    </location>
</feature>
<feature type="repeat" description="Solcar 2">
    <location>
        <begin position="128"/>
        <end position="219"/>
    </location>
</feature>
<feature type="repeat" description="Solcar 3">
    <location>
        <begin position="241"/>
        <end position="322" status="greater than"/>
    </location>
</feature>
<feature type="non-terminal residue">
    <location>
        <position position="322"/>
    </location>
</feature>
<evidence type="ECO:0000250" key="1">
    <source>
        <dbReference type="UniProtKB" id="P16260"/>
    </source>
</evidence>
<evidence type="ECO:0000250" key="2">
    <source>
        <dbReference type="UniProtKB" id="Q01888"/>
    </source>
</evidence>
<evidence type="ECO:0000255" key="3"/>
<evidence type="ECO:0000305" key="4"/>
<evidence type="ECO:0000312" key="5">
    <source>
        <dbReference type="RGD" id="1311311"/>
    </source>
</evidence>
<dbReference type="EMBL" id="M32973">
    <property type="protein sequence ID" value="AAA41639.1"/>
    <property type="molecule type" value="mRNA"/>
</dbReference>
<dbReference type="SMR" id="P16261"/>
<dbReference type="FunCoup" id="P16261">
    <property type="interactions" value="724"/>
</dbReference>
<dbReference type="PhosphoSitePlus" id="P16261"/>
<dbReference type="PaxDb" id="10116-ENSRNOP00000052899"/>
<dbReference type="PeptideAtlas" id="P16261"/>
<dbReference type="UCSC" id="RGD:1311311">
    <property type="organism name" value="rat"/>
</dbReference>
<dbReference type="AGR" id="RGD:1311311"/>
<dbReference type="RGD" id="1311311">
    <property type="gene designation" value="Slc25a16"/>
</dbReference>
<dbReference type="eggNOG" id="KOG0752">
    <property type="taxonomic scope" value="Eukaryota"/>
</dbReference>
<dbReference type="InParanoid" id="P16261"/>
<dbReference type="Reactome" id="R-RNO-199220">
    <property type="pathway name" value="Vitamin B5 (pantothenate) metabolism"/>
</dbReference>
<dbReference type="Proteomes" id="UP000002494">
    <property type="component" value="Unplaced"/>
</dbReference>
<dbReference type="GO" id="GO:0005743">
    <property type="term" value="C:mitochondrial inner membrane"/>
    <property type="evidence" value="ECO:0000318"/>
    <property type="project" value="GO_Central"/>
</dbReference>
<dbReference type="GO" id="GO:0015228">
    <property type="term" value="F:coenzyme A transmembrane transporter activity"/>
    <property type="evidence" value="ECO:0000318"/>
    <property type="project" value="GO_Central"/>
</dbReference>
<dbReference type="GO" id="GO:1990559">
    <property type="term" value="P:mitochondrial coenzyme A transmembrane transport"/>
    <property type="evidence" value="ECO:0000318"/>
    <property type="project" value="GO_Central"/>
</dbReference>
<dbReference type="FunFam" id="1.50.40.10:FF:000052">
    <property type="entry name" value="Solute carrier family 25 member 16"/>
    <property type="match status" value="1"/>
</dbReference>
<dbReference type="Gene3D" id="1.50.40.10">
    <property type="entry name" value="Mitochondrial carrier domain"/>
    <property type="match status" value="1"/>
</dbReference>
<dbReference type="InterPro" id="IPR002167">
    <property type="entry name" value="GDC-like"/>
</dbReference>
<dbReference type="InterPro" id="IPR002067">
    <property type="entry name" value="Mit_carrier"/>
</dbReference>
<dbReference type="InterPro" id="IPR018108">
    <property type="entry name" value="Mitochondrial_sb/sol_carrier"/>
</dbReference>
<dbReference type="InterPro" id="IPR023395">
    <property type="entry name" value="Mt_carrier_dom_sf"/>
</dbReference>
<dbReference type="PANTHER" id="PTHR24089">
    <property type="entry name" value="SOLUTE CARRIER FAMILY 25"/>
    <property type="match status" value="1"/>
</dbReference>
<dbReference type="Pfam" id="PF00153">
    <property type="entry name" value="Mito_carr"/>
    <property type="match status" value="3"/>
</dbReference>
<dbReference type="PRINTS" id="PR00928">
    <property type="entry name" value="GRAVESDC"/>
</dbReference>
<dbReference type="PRINTS" id="PR00926">
    <property type="entry name" value="MITOCARRIER"/>
</dbReference>
<dbReference type="SUPFAM" id="SSF103506">
    <property type="entry name" value="Mitochondrial carrier"/>
    <property type="match status" value="1"/>
</dbReference>
<dbReference type="PROSITE" id="PS50920">
    <property type="entry name" value="SOLCAR"/>
    <property type="match status" value="3"/>
</dbReference>
<organism>
    <name type="scientific">Rattus norvegicus</name>
    <name type="common">Rat</name>
    <dbReference type="NCBI Taxonomy" id="10116"/>
    <lineage>
        <taxon>Eukaryota</taxon>
        <taxon>Metazoa</taxon>
        <taxon>Chordata</taxon>
        <taxon>Craniata</taxon>
        <taxon>Vertebrata</taxon>
        <taxon>Euteleostomi</taxon>
        <taxon>Mammalia</taxon>
        <taxon>Eutheria</taxon>
        <taxon>Euarchontoglires</taxon>
        <taxon>Glires</taxon>
        <taxon>Rodentia</taxon>
        <taxon>Myomorpha</taxon>
        <taxon>Muroidea</taxon>
        <taxon>Muridae</taxon>
        <taxon>Murinae</taxon>
        <taxon>Rattus</taxon>
    </lineage>
</organism>